<organism>
    <name type="scientific">Arabidopsis thaliana</name>
    <name type="common">Mouse-ear cress</name>
    <dbReference type="NCBI Taxonomy" id="3702"/>
    <lineage>
        <taxon>Eukaryota</taxon>
        <taxon>Viridiplantae</taxon>
        <taxon>Streptophyta</taxon>
        <taxon>Embryophyta</taxon>
        <taxon>Tracheophyta</taxon>
        <taxon>Spermatophyta</taxon>
        <taxon>Magnoliopsida</taxon>
        <taxon>eudicotyledons</taxon>
        <taxon>Gunneridae</taxon>
        <taxon>Pentapetalae</taxon>
        <taxon>rosids</taxon>
        <taxon>malvids</taxon>
        <taxon>Brassicales</taxon>
        <taxon>Brassicaceae</taxon>
        <taxon>Camelineae</taxon>
        <taxon>Arabidopsis</taxon>
    </lineage>
</organism>
<evidence type="ECO:0000255" key="1"/>
<evidence type="ECO:0000256" key="2">
    <source>
        <dbReference type="SAM" id="MobiDB-lite"/>
    </source>
</evidence>
<evidence type="ECO:0000305" key="3"/>
<keyword id="KW-0472">Membrane</keyword>
<keyword id="KW-1185">Reference proteome</keyword>
<keyword id="KW-0812">Transmembrane</keyword>
<keyword id="KW-1133">Transmembrane helix</keyword>
<keyword id="KW-0813">Transport</keyword>
<feature type="chain" id="PRO_0000317393" description="Probable purine permease 6">
    <location>
        <begin position="1"/>
        <end position="387"/>
    </location>
</feature>
<feature type="transmembrane region" description="Helical" evidence="1">
    <location>
        <begin position="36"/>
        <end position="56"/>
    </location>
</feature>
<feature type="transmembrane region" description="Helical" evidence="1">
    <location>
        <begin position="68"/>
        <end position="88"/>
    </location>
</feature>
<feature type="transmembrane region" description="Helical" evidence="1">
    <location>
        <begin position="106"/>
        <end position="126"/>
    </location>
</feature>
<feature type="transmembrane region" description="Helical" evidence="1">
    <location>
        <begin position="129"/>
        <end position="149"/>
    </location>
</feature>
<feature type="transmembrane region" description="Helical" evidence="1">
    <location>
        <begin position="162"/>
        <end position="182"/>
    </location>
</feature>
<feature type="transmembrane region" description="Helical" evidence="1">
    <location>
        <begin position="201"/>
        <end position="221"/>
    </location>
</feature>
<feature type="transmembrane region" description="Helical" evidence="1">
    <location>
        <begin position="238"/>
        <end position="258"/>
    </location>
</feature>
<feature type="transmembrane region" description="Helical" evidence="1">
    <location>
        <begin position="283"/>
        <end position="303"/>
    </location>
</feature>
<feature type="transmembrane region" description="Helical" evidence="1">
    <location>
        <begin position="309"/>
        <end position="329"/>
    </location>
</feature>
<feature type="transmembrane region" description="Helical" evidence="1">
    <location>
        <begin position="333"/>
        <end position="353"/>
    </location>
</feature>
<feature type="region of interest" description="Disordered" evidence="2">
    <location>
        <begin position="1"/>
        <end position="24"/>
    </location>
</feature>
<feature type="region of interest" description="Disordered" evidence="2">
    <location>
        <begin position="362"/>
        <end position="387"/>
    </location>
</feature>
<feature type="compositionally biased region" description="Basic and acidic residues" evidence="2">
    <location>
        <begin position="9"/>
        <end position="24"/>
    </location>
</feature>
<feature type="compositionally biased region" description="Basic and acidic residues" evidence="2">
    <location>
        <begin position="370"/>
        <end position="381"/>
    </location>
</feature>
<accession>O49722</accession>
<comment type="subcellular location">
    <subcellularLocation>
        <location evidence="3">Membrane</location>
        <topology evidence="3">Multi-pass membrane protein</topology>
    </subcellularLocation>
</comment>
<comment type="similarity">
    <text evidence="3">Belongs to the purine permeases (TC 2.A.7.14) family.</text>
</comment>
<comment type="sequence caution" evidence="3">
    <conflict type="erroneous gene model prediction">
        <sequence resource="EMBL-CDS" id="CAA16790"/>
    </conflict>
</comment>
<comment type="sequence caution" evidence="3">
    <conflict type="erroneous gene model prediction">
        <sequence resource="EMBL-CDS" id="CAB78821"/>
    </conflict>
</comment>
<name>PUP6_ARATH</name>
<gene>
    <name type="primary">PUP6</name>
    <name type="ordered locus">At4g18190</name>
    <name type="ORF">T9A21.30</name>
</gene>
<sequence>MMELESETQELHLHVNGEPEGKFSTEERSHKYSWRLRVSLYVTLLLAGETIATLLGRLYYEKGGKSTWLETLVQLVGFPLTLPCYYYLKPEPSKTKTITKKTTSSFLTLSLVYIGLGLLVAGHCILYSFGLLYLPVSTFSLISASQLAFNAVFSYFLNSQKITPFILNSLVLLTISSTLLVIQHEPESPSSTSKSAAKSKYVIGYICAVGSSAGYSLVLSLTDYAFEKILKKYTFKAILDMATYPSMVATCVVVVGLFGSGGWKKLSTEMEEFQLGKSSYILINIGSTISWQACLIGSVGLIIEVSSLFSNVISTLCLPVVPVLAVVFFRDEMSGIKLVAMFLAIWGFVSYGYQHYVNDRKPEEDQELPQSKEEEEQKQVDTIHVQA</sequence>
<protein>
    <recommendedName>
        <fullName>Probable purine permease 6</fullName>
        <shortName>AtPUP6</shortName>
    </recommendedName>
</protein>
<dbReference type="EMBL" id="AL021713">
    <property type="protein sequence ID" value="CAA16790.1"/>
    <property type="status" value="ALT_SEQ"/>
    <property type="molecule type" value="Genomic_DNA"/>
</dbReference>
<dbReference type="EMBL" id="AL161548">
    <property type="protein sequence ID" value="CAB78821.1"/>
    <property type="status" value="ALT_SEQ"/>
    <property type="molecule type" value="Genomic_DNA"/>
</dbReference>
<dbReference type="EMBL" id="CP002687">
    <property type="protein sequence ID" value="AEE84008.1"/>
    <property type="molecule type" value="Genomic_DNA"/>
</dbReference>
<dbReference type="PIR" id="T04921">
    <property type="entry name" value="T04921"/>
</dbReference>
<dbReference type="RefSeq" id="NP_193553.2">
    <property type="nucleotide sequence ID" value="NM_117929.3"/>
</dbReference>
<dbReference type="STRING" id="3702.O49722"/>
<dbReference type="PaxDb" id="3702-AT4G18190.1"/>
<dbReference type="EnsemblPlants" id="AT4G18190.1">
    <property type="protein sequence ID" value="AT4G18190.1"/>
    <property type="gene ID" value="AT4G18190"/>
</dbReference>
<dbReference type="GeneID" id="827544"/>
<dbReference type="Gramene" id="AT4G18190.1">
    <property type="protein sequence ID" value="AT4G18190.1"/>
    <property type="gene ID" value="AT4G18190"/>
</dbReference>
<dbReference type="KEGG" id="ath:AT4G18190"/>
<dbReference type="Araport" id="AT4G18190"/>
<dbReference type="TAIR" id="AT4G18190">
    <property type="gene designation" value="PUP6"/>
</dbReference>
<dbReference type="eggNOG" id="ENOG502QVMQ">
    <property type="taxonomic scope" value="Eukaryota"/>
</dbReference>
<dbReference type="HOGENOM" id="CLU_043459_2_1_1"/>
<dbReference type="InParanoid" id="O49722"/>
<dbReference type="OMA" id="TISWQAC"/>
<dbReference type="PhylomeDB" id="O49722"/>
<dbReference type="PRO" id="PR:O49722"/>
<dbReference type="Proteomes" id="UP000006548">
    <property type="component" value="Chromosome 4"/>
</dbReference>
<dbReference type="ExpressionAtlas" id="O49722">
    <property type="expression patterns" value="baseline and differential"/>
</dbReference>
<dbReference type="GO" id="GO:0016020">
    <property type="term" value="C:membrane"/>
    <property type="evidence" value="ECO:0000304"/>
    <property type="project" value="TAIR"/>
</dbReference>
<dbReference type="GO" id="GO:0005345">
    <property type="term" value="F:purine nucleobase transmembrane transporter activity"/>
    <property type="evidence" value="ECO:0000304"/>
    <property type="project" value="TAIR"/>
</dbReference>
<dbReference type="GO" id="GO:0015211">
    <property type="term" value="F:purine nucleoside transmembrane transporter activity"/>
    <property type="evidence" value="ECO:0007669"/>
    <property type="project" value="InterPro"/>
</dbReference>
<dbReference type="GO" id="GO:0006863">
    <property type="term" value="P:purine nucleobase transport"/>
    <property type="evidence" value="ECO:0000304"/>
    <property type="project" value="TAIR"/>
</dbReference>
<dbReference type="InterPro" id="IPR030182">
    <property type="entry name" value="PUP_plant"/>
</dbReference>
<dbReference type="PANTHER" id="PTHR31376">
    <property type="entry name" value="OS09G0467300 PROTEIN-RELATED"/>
    <property type="match status" value="1"/>
</dbReference>
<dbReference type="PANTHER" id="PTHR31376:SF67">
    <property type="entry name" value="PURINE PERMEASE 6-RELATED"/>
    <property type="match status" value="1"/>
</dbReference>
<dbReference type="Pfam" id="PF16913">
    <property type="entry name" value="PUNUT"/>
    <property type="match status" value="1"/>
</dbReference>
<dbReference type="SUPFAM" id="SSF103481">
    <property type="entry name" value="Multidrug resistance efflux transporter EmrE"/>
    <property type="match status" value="1"/>
</dbReference>
<reference key="1">
    <citation type="journal article" date="1999" name="Nature">
        <title>Sequence and analysis of chromosome 4 of the plant Arabidopsis thaliana.</title>
        <authorList>
            <person name="Mayer K.F.X."/>
            <person name="Schueller C."/>
            <person name="Wambutt R."/>
            <person name="Murphy G."/>
            <person name="Volckaert G."/>
            <person name="Pohl T."/>
            <person name="Duesterhoeft A."/>
            <person name="Stiekema W."/>
            <person name="Entian K.-D."/>
            <person name="Terryn N."/>
            <person name="Harris B."/>
            <person name="Ansorge W."/>
            <person name="Brandt P."/>
            <person name="Grivell L.A."/>
            <person name="Rieger M."/>
            <person name="Weichselgartner M."/>
            <person name="de Simone V."/>
            <person name="Obermaier B."/>
            <person name="Mache R."/>
            <person name="Mueller M."/>
            <person name="Kreis M."/>
            <person name="Delseny M."/>
            <person name="Puigdomenech P."/>
            <person name="Watson M."/>
            <person name="Schmidtheini T."/>
            <person name="Reichert B."/>
            <person name="Portetelle D."/>
            <person name="Perez-Alonso M."/>
            <person name="Boutry M."/>
            <person name="Bancroft I."/>
            <person name="Vos P."/>
            <person name="Hoheisel J."/>
            <person name="Zimmermann W."/>
            <person name="Wedler H."/>
            <person name="Ridley P."/>
            <person name="Langham S.-A."/>
            <person name="McCullagh B."/>
            <person name="Bilham L."/>
            <person name="Robben J."/>
            <person name="van der Schueren J."/>
            <person name="Grymonprez B."/>
            <person name="Chuang Y.-J."/>
            <person name="Vandenbussche F."/>
            <person name="Braeken M."/>
            <person name="Weltjens I."/>
            <person name="Voet M."/>
            <person name="Bastiaens I."/>
            <person name="Aert R."/>
            <person name="Defoor E."/>
            <person name="Weitzenegger T."/>
            <person name="Bothe G."/>
            <person name="Ramsperger U."/>
            <person name="Hilbert H."/>
            <person name="Braun M."/>
            <person name="Holzer E."/>
            <person name="Brandt A."/>
            <person name="Peters S."/>
            <person name="van Staveren M."/>
            <person name="Dirkse W."/>
            <person name="Mooijman P."/>
            <person name="Klein Lankhorst R."/>
            <person name="Rose M."/>
            <person name="Hauf J."/>
            <person name="Koetter P."/>
            <person name="Berneiser S."/>
            <person name="Hempel S."/>
            <person name="Feldpausch M."/>
            <person name="Lamberth S."/>
            <person name="Van den Daele H."/>
            <person name="De Keyser A."/>
            <person name="Buysshaert C."/>
            <person name="Gielen J."/>
            <person name="Villarroel R."/>
            <person name="De Clercq R."/>
            <person name="van Montagu M."/>
            <person name="Rogers J."/>
            <person name="Cronin A."/>
            <person name="Quail M.A."/>
            <person name="Bray-Allen S."/>
            <person name="Clark L."/>
            <person name="Doggett J."/>
            <person name="Hall S."/>
            <person name="Kay M."/>
            <person name="Lennard N."/>
            <person name="McLay K."/>
            <person name="Mayes R."/>
            <person name="Pettett A."/>
            <person name="Rajandream M.A."/>
            <person name="Lyne M."/>
            <person name="Benes V."/>
            <person name="Rechmann S."/>
            <person name="Borkova D."/>
            <person name="Bloecker H."/>
            <person name="Scharfe M."/>
            <person name="Grimm M."/>
            <person name="Loehnert T.-H."/>
            <person name="Dose S."/>
            <person name="de Haan M."/>
            <person name="Maarse A.C."/>
            <person name="Schaefer M."/>
            <person name="Mueller-Auer S."/>
            <person name="Gabel C."/>
            <person name="Fuchs M."/>
            <person name="Fartmann B."/>
            <person name="Granderath K."/>
            <person name="Dauner D."/>
            <person name="Herzl A."/>
            <person name="Neumann S."/>
            <person name="Argiriou A."/>
            <person name="Vitale D."/>
            <person name="Liguori R."/>
            <person name="Piravandi E."/>
            <person name="Massenet O."/>
            <person name="Quigley F."/>
            <person name="Clabauld G."/>
            <person name="Muendlein A."/>
            <person name="Felber R."/>
            <person name="Schnabl S."/>
            <person name="Hiller R."/>
            <person name="Schmidt W."/>
            <person name="Lecharny A."/>
            <person name="Aubourg S."/>
            <person name="Chefdor F."/>
            <person name="Cooke R."/>
            <person name="Berger C."/>
            <person name="Monfort A."/>
            <person name="Casacuberta E."/>
            <person name="Gibbons T."/>
            <person name="Weber N."/>
            <person name="Vandenbol M."/>
            <person name="Bargues M."/>
            <person name="Terol J."/>
            <person name="Torres A."/>
            <person name="Perez-Perez A."/>
            <person name="Purnelle B."/>
            <person name="Bent E."/>
            <person name="Johnson S."/>
            <person name="Tacon D."/>
            <person name="Jesse T."/>
            <person name="Heijnen L."/>
            <person name="Schwarz S."/>
            <person name="Scholler P."/>
            <person name="Heber S."/>
            <person name="Francs P."/>
            <person name="Bielke C."/>
            <person name="Frishman D."/>
            <person name="Haase D."/>
            <person name="Lemcke K."/>
            <person name="Mewes H.-W."/>
            <person name="Stocker S."/>
            <person name="Zaccaria P."/>
            <person name="Bevan M."/>
            <person name="Wilson R.K."/>
            <person name="de la Bastide M."/>
            <person name="Habermann K."/>
            <person name="Parnell L."/>
            <person name="Dedhia N."/>
            <person name="Gnoj L."/>
            <person name="Schutz K."/>
            <person name="Huang E."/>
            <person name="Spiegel L."/>
            <person name="Sekhon M."/>
            <person name="Murray J."/>
            <person name="Sheet P."/>
            <person name="Cordes M."/>
            <person name="Abu-Threideh J."/>
            <person name="Stoneking T."/>
            <person name="Kalicki J."/>
            <person name="Graves T."/>
            <person name="Harmon G."/>
            <person name="Edwards J."/>
            <person name="Latreille P."/>
            <person name="Courtney L."/>
            <person name="Cloud J."/>
            <person name="Abbott A."/>
            <person name="Scott K."/>
            <person name="Johnson D."/>
            <person name="Minx P."/>
            <person name="Bentley D."/>
            <person name="Fulton B."/>
            <person name="Miller N."/>
            <person name="Greco T."/>
            <person name="Kemp K."/>
            <person name="Kramer J."/>
            <person name="Fulton L."/>
            <person name="Mardis E."/>
            <person name="Dante M."/>
            <person name="Pepin K."/>
            <person name="Hillier L.W."/>
            <person name="Nelson J."/>
            <person name="Spieth J."/>
            <person name="Ryan E."/>
            <person name="Andrews S."/>
            <person name="Geisel C."/>
            <person name="Layman D."/>
            <person name="Du H."/>
            <person name="Ali J."/>
            <person name="Berghoff A."/>
            <person name="Jones K."/>
            <person name="Drone K."/>
            <person name="Cotton M."/>
            <person name="Joshu C."/>
            <person name="Antonoiu B."/>
            <person name="Zidanic M."/>
            <person name="Strong C."/>
            <person name="Sun H."/>
            <person name="Lamar B."/>
            <person name="Yordan C."/>
            <person name="Ma P."/>
            <person name="Zhong J."/>
            <person name="Preston R."/>
            <person name="Vil D."/>
            <person name="Shekher M."/>
            <person name="Matero A."/>
            <person name="Shah R."/>
            <person name="Swaby I.K."/>
            <person name="O'Shaughnessy A."/>
            <person name="Rodriguez M."/>
            <person name="Hoffman J."/>
            <person name="Till S."/>
            <person name="Granat S."/>
            <person name="Shohdy N."/>
            <person name="Hasegawa A."/>
            <person name="Hameed A."/>
            <person name="Lodhi M."/>
            <person name="Johnson A."/>
            <person name="Chen E."/>
            <person name="Marra M.A."/>
            <person name="Martienssen R."/>
            <person name="McCombie W.R."/>
        </authorList>
    </citation>
    <scope>NUCLEOTIDE SEQUENCE [LARGE SCALE GENOMIC DNA]</scope>
    <source>
        <strain>cv. Columbia</strain>
    </source>
</reference>
<reference key="2">
    <citation type="journal article" date="2017" name="Plant J.">
        <title>Araport11: a complete reannotation of the Arabidopsis thaliana reference genome.</title>
        <authorList>
            <person name="Cheng C.Y."/>
            <person name="Krishnakumar V."/>
            <person name="Chan A.P."/>
            <person name="Thibaud-Nissen F."/>
            <person name="Schobel S."/>
            <person name="Town C.D."/>
        </authorList>
    </citation>
    <scope>GENOME REANNOTATION</scope>
    <source>
        <strain>cv. Columbia</strain>
    </source>
</reference>
<reference key="3">
    <citation type="journal article" date="2000" name="Plant Cell">
        <title>A new family of high-affinity transporters for adenine, cytosine, and purine derivatives in Arabidopsis.</title>
        <authorList>
            <person name="Gillissen B."/>
            <person name="Buerkle L."/>
            <person name="Andre B."/>
            <person name="Kuehn C."/>
            <person name="Rentsch D."/>
            <person name="Brandl B."/>
            <person name="Frommer W.B."/>
        </authorList>
    </citation>
    <scope>GENE FAMILY</scope>
    <scope>NOMENCLATURE</scope>
</reference>
<proteinExistence type="inferred from homology"/>